<keyword id="KW-1185">Reference proteome</keyword>
<organism>
    <name type="scientific">Deinococcus radiodurans (strain ATCC 13939 / DSM 20539 / JCM 16871 / CCUG 27074 / LMG 4051 / NBRC 15346 / NCIMB 9279 / VKM B-1422 / R1)</name>
    <dbReference type="NCBI Taxonomy" id="243230"/>
    <lineage>
        <taxon>Bacteria</taxon>
        <taxon>Thermotogati</taxon>
        <taxon>Deinococcota</taxon>
        <taxon>Deinococci</taxon>
        <taxon>Deinococcales</taxon>
        <taxon>Deinococcaceae</taxon>
        <taxon>Deinococcus</taxon>
    </lineage>
</organism>
<feature type="chain" id="PRO_0000326877" description="UPF0548 protein DR_2035">
    <location>
        <begin position="1"/>
        <end position="198"/>
    </location>
</feature>
<sequence length="198" mass="22241">MFLLRPPTPAQVAAFVARSREQAPSYAETGWSLDGRTPDWARSGRHRVRVGEGEACWERAKAALRGGQMFQDWVLRPHGEASTPLSRQGATVVLLVRHFGPWGRRKWGLYSLMTNRVLYLVDEPDRYGFGYGTLPGHLVRGEERFLLERDAGGAVWFDLTTFSRAALPFSRFAQPLVGAAQRRGARHYARMLVRAAGC</sequence>
<evidence type="ECO:0000305" key="1"/>
<protein>
    <recommendedName>
        <fullName>UPF0548 protein DR_2035</fullName>
    </recommendedName>
</protein>
<gene>
    <name type="ordered locus">DR_2035</name>
</gene>
<dbReference type="EMBL" id="AE000513">
    <property type="protein sequence ID" value="AAF11585.1"/>
    <property type="molecule type" value="Genomic_DNA"/>
</dbReference>
<dbReference type="PIR" id="D75322">
    <property type="entry name" value="D75322"/>
</dbReference>
<dbReference type="RefSeq" id="NP_295758.1">
    <property type="nucleotide sequence ID" value="NC_001263.1"/>
</dbReference>
<dbReference type="RefSeq" id="WP_010888667.1">
    <property type="nucleotide sequence ID" value="NC_001263.1"/>
</dbReference>
<dbReference type="STRING" id="243230.DR_2035"/>
<dbReference type="TCDB" id="1.B.77.1.8">
    <property type="family name" value="the chloroplast outer membrane porin (oep23) family"/>
</dbReference>
<dbReference type="PaxDb" id="243230-DR_2035"/>
<dbReference type="EnsemblBacteria" id="AAF11585">
    <property type="protein sequence ID" value="AAF11585"/>
    <property type="gene ID" value="DR_2035"/>
</dbReference>
<dbReference type="GeneID" id="69518275"/>
<dbReference type="KEGG" id="dra:DR_2035"/>
<dbReference type="PATRIC" id="fig|243230.17.peg.2262"/>
<dbReference type="eggNOG" id="COG4762">
    <property type="taxonomic scope" value="Bacteria"/>
</dbReference>
<dbReference type="HOGENOM" id="CLU_080841_0_1_0"/>
<dbReference type="InParanoid" id="Q9RST8"/>
<dbReference type="OrthoDB" id="120660at2"/>
<dbReference type="Proteomes" id="UP000002524">
    <property type="component" value="Chromosome 1"/>
</dbReference>
<dbReference type="InterPro" id="IPR018960">
    <property type="entry name" value="DUF1990"/>
</dbReference>
<dbReference type="InterPro" id="IPR014457">
    <property type="entry name" value="UCP010260"/>
</dbReference>
<dbReference type="PANTHER" id="PTHR34202">
    <property type="entry name" value="UPF0548 PROTEIN"/>
    <property type="match status" value="1"/>
</dbReference>
<dbReference type="PANTHER" id="PTHR34202:SF1">
    <property type="entry name" value="UPF0548 PROTEIN"/>
    <property type="match status" value="1"/>
</dbReference>
<dbReference type="Pfam" id="PF09348">
    <property type="entry name" value="DUF1990"/>
    <property type="match status" value="1"/>
</dbReference>
<dbReference type="PIRSF" id="PIRSF010260">
    <property type="entry name" value="UCP010260"/>
    <property type="match status" value="1"/>
</dbReference>
<name>Y2035_DEIRA</name>
<comment type="similarity">
    <text evidence="1">Belongs to the UPF0548 family.</text>
</comment>
<reference key="1">
    <citation type="journal article" date="1999" name="Science">
        <title>Genome sequence of the radioresistant bacterium Deinococcus radiodurans R1.</title>
        <authorList>
            <person name="White O."/>
            <person name="Eisen J.A."/>
            <person name="Heidelberg J.F."/>
            <person name="Hickey E.K."/>
            <person name="Peterson J.D."/>
            <person name="Dodson R.J."/>
            <person name="Haft D.H."/>
            <person name="Gwinn M.L."/>
            <person name="Nelson W.C."/>
            <person name="Richardson D.L."/>
            <person name="Moffat K.S."/>
            <person name="Qin H."/>
            <person name="Jiang L."/>
            <person name="Pamphile W."/>
            <person name="Crosby M."/>
            <person name="Shen M."/>
            <person name="Vamathevan J.J."/>
            <person name="Lam P."/>
            <person name="McDonald L.A."/>
            <person name="Utterback T.R."/>
            <person name="Zalewski C."/>
            <person name="Makarova K.S."/>
            <person name="Aravind L."/>
            <person name="Daly M.J."/>
            <person name="Minton K.W."/>
            <person name="Fleischmann R.D."/>
            <person name="Ketchum K.A."/>
            <person name="Nelson K.E."/>
            <person name="Salzberg S.L."/>
            <person name="Smith H.O."/>
            <person name="Venter J.C."/>
            <person name="Fraser C.M."/>
        </authorList>
    </citation>
    <scope>NUCLEOTIDE SEQUENCE [LARGE SCALE GENOMIC DNA]</scope>
    <source>
        <strain>ATCC 13939 / DSM 20539 / JCM 16871 / CCUG 27074 / LMG 4051 / NBRC 15346 / NCIMB 9279 / VKM B-1422 / R1</strain>
    </source>
</reference>
<proteinExistence type="inferred from homology"/>
<accession>Q9RST8</accession>